<sequence length="245" mass="26785">MAGHSHWAGIKHKKGANDAARGKIFQKMFKEIYVAATGPGGTDPSSNPALRLAISKAKAKSMPKANIERALDKAKGNAKDGAVFTEIIYNATISGGATFLVITLSDNVNRTTSNIQSYFNKQNAKLGKTGTIPFQFDHKGIMEISKSLVDEESLTIVCLENGAEDIEATDESFIITTSVEDFSTCKSAIESNLNITEFMQCEITYLPNATVTFTGEKAQKIQDFIAKLEDDDDVQEVFHNIEFEE</sequence>
<evidence type="ECO:0000255" key="1">
    <source>
        <dbReference type="HAMAP-Rule" id="MF_00693"/>
    </source>
</evidence>
<accession>A5IZA0</accession>
<proteinExistence type="inferred from homology"/>
<organism>
    <name type="scientific">Mycoplasmopsis agalactiae (strain NCTC 10123 / CIP 59.7 / PG2)</name>
    <name type="common">Mycoplasma agalactiae</name>
    <dbReference type="NCBI Taxonomy" id="347257"/>
    <lineage>
        <taxon>Bacteria</taxon>
        <taxon>Bacillati</taxon>
        <taxon>Mycoplasmatota</taxon>
        <taxon>Mycoplasmoidales</taxon>
        <taxon>Metamycoplasmataceae</taxon>
        <taxon>Mycoplasmopsis</taxon>
    </lineage>
</organism>
<dbReference type="EMBL" id="CU179680">
    <property type="protein sequence ID" value="CAL59359.1"/>
    <property type="molecule type" value="Genomic_DNA"/>
</dbReference>
<dbReference type="RefSeq" id="WP_011949812.1">
    <property type="nucleotide sequence ID" value="NC_009497.1"/>
</dbReference>
<dbReference type="SMR" id="A5IZA0"/>
<dbReference type="STRING" id="347257.MAG6590"/>
<dbReference type="GeneID" id="93358384"/>
<dbReference type="KEGG" id="maa:MAG6590"/>
<dbReference type="HOGENOM" id="CLU_062974_1_0_14"/>
<dbReference type="Proteomes" id="UP000007065">
    <property type="component" value="Chromosome"/>
</dbReference>
<dbReference type="GO" id="GO:0005829">
    <property type="term" value="C:cytosol"/>
    <property type="evidence" value="ECO:0007669"/>
    <property type="project" value="TreeGrafter"/>
</dbReference>
<dbReference type="GO" id="GO:0003677">
    <property type="term" value="F:DNA binding"/>
    <property type="evidence" value="ECO:0007669"/>
    <property type="project" value="UniProtKB-UniRule"/>
</dbReference>
<dbReference type="GO" id="GO:0006355">
    <property type="term" value="P:regulation of DNA-templated transcription"/>
    <property type="evidence" value="ECO:0007669"/>
    <property type="project" value="UniProtKB-UniRule"/>
</dbReference>
<dbReference type="FunFam" id="1.10.10.200:FF:000002">
    <property type="entry name" value="Probable transcriptional regulatory protein CLM62_37755"/>
    <property type="match status" value="1"/>
</dbReference>
<dbReference type="Gene3D" id="1.10.10.200">
    <property type="match status" value="1"/>
</dbReference>
<dbReference type="Gene3D" id="3.30.70.980">
    <property type="match status" value="2"/>
</dbReference>
<dbReference type="HAMAP" id="MF_00693">
    <property type="entry name" value="Transcrip_reg_TACO1"/>
    <property type="match status" value="1"/>
</dbReference>
<dbReference type="InterPro" id="IPR017856">
    <property type="entry name" value="Integrase-like_N"/>
</dbReference>
<dbReference type="InterPro" id="IPR048300">
    <property type="entry name" value="TACO1_YebC-like_2nd/3rd_dom"/>
</dbReference>
<dbReference type="InterPro" id="IPR049083">
    <property type="entry name" value="TACO1_YebC_N"/>
</dbReference>
<dbReference type="InterPro" id="IPR002876">
    <property type="entry name" value="Transcrip_reg_TACO1-like"/>
</dbReference>
<dbReference type="InterPro" id="IPR026564">
    <property type="entry name" value="Transcrip_reg_TACO1-like_dom3"/>
</dbReference>
<dbReference type="InterPro" id="IPR029072">
    <property type="entry name" value="YebC-like"/>
</dbReference>
<dbReference type="NCBIfam" id="NF001030">
    <property type="entry name" value="PRK00110.1"/>
    <property type="match status" value="1"/>
</dbReference>
<dbReference type="NCBIfam" id="NF009044">
    <property type="entry name" value="PRK12378.1"/>
    <property type="match status" value="1"/>
</dbReference>
<dbReference type="NCBIfam" id="TIGR01033">
    <property type="entry name" value="YebC/PmpR family DNA-binding transcriptional regulator"/>
    <property type="match status" value="1"/>
</dbReference>
<dbReference type="PANTHER" id="PTHR12532:SF6">
    <property type="entry name" value="TRANSCRIPTIONAL REGULATORY PROTEIN YEBC-RELATED"/>
    <property type="match status" value="1"/>
</dbReference>
<dbReference type="PANTHER" id="PTHR12532">
    <property type="entry name" value="TRANSLATIONAL ACTIVATOR OF CYTOCHROME C OXIDASE 1"/>
    <property type="match status" value="1"/>
</dbReference>
<dbReference type="Pfam" id="PF20772">
    <property type="entry name" value="TACO1_YebC_N"/>
    <property type="match status" value="1"/>
</dbReference>
<dbReference type="Pfam" id="PF01709">
    <property type="entry name" value="Transcrip_reg"/>
    <property type="match status" value="1"/>
</dbReference>
<dbReference type="SUPFAM" id="SSF75625">
    <property type="entry name" value="YebC-like"/>
    <property type="match status" value="1"/>
</dbReference>
<protein>
    <recommendedName>
        <fullName evidence="1">Probable transcriptional regulatory protein MAG6590</fullName>
    </recommendedName>
</protein>
<reference key="1">
    <citation type="journal article" date="2007" name="PLoS Genet.">
        <title>Being pathogenic, plastic, and sexual while living with a nearly minimal bacterial genome.</title>
        <authorList>
            <person name="Sirand-Pugnet P."/>
            <person name="Lartigue C."/>
            <person name="Marenda M."/>
            <person name="Jacob D."/>
            <person name="Barre A."/>
            <person name="Barbe V."/>
            <person name="Schenowitz C."/>
            <person name="Mangenot S."/>
            <person name="Couloux A."/>
            <person name="Segurens B."/>
            <person name="de Daruvar A."/>
            <person name="Blanchard A."/>
            <person name="Citti C."/>
        </authorList>
    </citation>
    <scope>NUCLEOTIDE SEQUENCE [LARGE SCALE GENOMIC DNA]</scope>
    <source>
        <strain>NCTC 10123 / CIP 59.7 / PG2</strain>
    </source>
</reference>
<name>Y6590_MYCAP</name>
<feature type="chain" id="PRO_1000132218" description="Probable transcriptional regulatory protein MAG6590">
    <location>
        <begin position="1"/>
        <end position="245"/>
    </location>
</feature>
<comment type="subcellular location">
    <subcellularLocation>
        <location evidence="1">Cytoplasm</location>
    </subcellularLocation>
</comment>
<comment type="similarity">
    <text evidence="1">Belongs to the TACO1 family.</text>
</comment>
<keyword id="KW-0963">Cytoplasm</keyword>
<keyword id="KW-0238">DNA-binding</keyword>
<keyword id="KW-1185">Reference proteome</keyword>
<keyword id="KW-0804">Transcription</keyword>
<keyword id="KW-0805">Transcription regulation</keyword>
<gene>
    <name type="ordered locus">MAG6590</name>
</gene>